<accession>A5FQU1</accession>
<keyword id="KW-1003">Cell membrane</keyword>
<keyword id="KW-0472">Membrane</keyword>
<keyword id="KW-0808">Transferase</keyword>
<keyword id="KW-0812">Transmembrane</keyword>
<keyword id="KW-1133">Transmembrane helix</keyword>
<evidence type="ECO:0000255" key="1">
    <source>
        <dbReference type="HAMAP-Rule" id="MF_01147"/>
    </source>
</evidence>
<comment type="function">
    <text evidence="1">Catalyzes the transfer of the diacylglyceryl group from phosphatidylglycerol to the sulfhydryl group of the N-terminal cysteine of a prolipoprotein, the first step in the formation of mature lipoproteins.</text>
</comment>
<comment type="catalytic activity">
    <reaction evidence="1">
        <text>L-cysteinyl-[prolipoprotein] + a 1,2-diacyl-sn-glycero-3-phospho-(1'-sn-glycerol) = an S-1,2-diacyl-sn-glyceryl-L-cysteinyl-[prolipoprotein] + sn-glycerol 1-phosphate + H(+)</text>
        <dbReference type="Rhea" id="RHEA:56712"/>
        <dbReference type="Rhea" id="RHEA-COMP:14679"/>
        <dbReference type="Rhea" id="RHEA-COMP:14680"/>
        <dbReference type="ChEBI" id="CHEBI:15378"/>
        <dbReference type="ChEBI" id="CHEBI:29950"/>
        <dbReference type="ChEBI" id="CHEBI:57685"/>
        <dbReference type="ChEBI" id="CHEBI:64716"/>
        <dbReference type="ChEBI" id="CHEBI:140658"/>
        <dbReference type="EC" id="2.5.1.145"/>
    </reaction>
</comment>
<comment type="pathway">
    <text evidence="1">Protein modification; lipoprotein biosynthesis (diacylglyceryl transfer).</text>
</comment>
<comment type="subcellular location">
    <subcellularLocation>
        <location evidence="1">Cell membrane</location>
        <topology evidence="1">Multi-pass membrane protein</topology>
    </subcellularLocation>
</comment>
<comment type="similarity">
    <text evidence="1">Belongs to the Lgt family.</text>
</comment>
<reference key="1">
    <citation type="submission" date="2007-05" db="EMBL/GenBank/DDBJ databases">
        <title>Complete sequence of Dehalococcoides sp. BAV1.</title>
        <authorList>
            <consortium name="US DOE Joint Genome Institute"/>
            <person name="Copeland A."/>
            <person name="Lucas S."/>
            <person name="Lapidus A."/>
            <person name="Barry K."/>
            <person name="Detter J.C."/>
            <person name="Glavina del Rio T."/>
            <person name="Hammon N."/>
            <person name="Israni S."/>
            <person name="Pitluck S."/>
            <person name="Lowry S."/>
            <person name="Clum A."/>
            <person name="Schmutz J."/>
            <person name="Larimer F."/>
            <person name="Land M."/>
            <person name="Hauser L."/>
            <person name="Kyrpides N."/>
            <person name="Kim E."/>
            <person name="Ritalahti K.M."/>
            <person name="Loeffler F."/>
            <person name="Richardson P."/>
        </authorList>
    </citation>
    <scope>NUCLEOTIDE SEQUENCE [LARGE SCALE GENOMIC DNA]</scope>
    <source>
        <strain>ATCC BAA-2100 / JCM 16839 / KCTC 5957 / BAV1</strain>
    </source>
</reference>
<feature type="chain" id="PRO_1000085073" description="Phosphatidylglycerol--prolipoprotein diacylglyceryl transferase">
    <location>
        <begin position="1"/>
        <end position="260"/>
    </location>
</feature>
<feature type="transmembrane region" description="Helical" evidence="1">
    <location>
        <begin position="17"/>
        <end position="37"/>
    </location>
</feature>
<feature type="transmembrane region" description="Helical" evidence="1">
    <location>
        <begin position="52"/>
        <end position="72"/>
    </location>
</feature>
<feature type="transmembrane region" description="Helical" evidence="1">
    <location>
        <begin position="85"/>
        <end position="105"/>
    </location>
</feature>
<feature type="transmembrane region" description="Helical" evidence="1">
    <location>
        <begin position="113"/>
        <end position="133"/>
    </location>
</feature>
<feature type="transmembrane region" description="Helical" evidence="1">
    <location>
        <begin position="170"/>
        <end position="190"/>
    </location>
</feature>
<feature type="transmembrane region" description="Helical" evidence="1">
    <location>
        <begin position="198"/>
        <end position="218"/>
    </location>
</feature>
<feature type="transmembrane region" description="Helical" evidence="1">
    <location>
        <begin position="227"/>
        <end position="247"/>
    </location>
</feature>
<feature type="binding site" evidence="1">
    <location>
        <position position="134"/>
    </location>
    <ligand>
        <name>a 1,2-diacyl-sn-glycero-3-phospho-(1'-sn-glycerol)</name>
        <dbReference type="ChEBI" id="CHEBI:64716"/>
    </ligand>
</feature>
<organism>
    <name type="scientific">Dehalococcoides mccartyi (strain ATCC BAA-2100 / JCM 16839 / KCTC 5957 / BAV1)</name>
    <dbReference type="NCBI Taxonomy" id="216389"/>
    <lineage>
        <taxon>Bacteria</taxon>
        <taxon>Bacillati</taxon>
        <taxon>Chloroflexota</taxon>
        <taxon>Dehalococcoidia</taxon>
        <taxon>Dehalococcoidales</taxon>
        <taxon>Dehalococcoidaceae</taxon>
        <taxon>Dehalococcoides</taxon>
    </lineage>
</organism>
<protein>
    <recommendedName>
        <fullName evidence="1">Phosphatidylglycerol--prolipoprotein diacylglyceryl transferase</fullName>
        <ecNumber evidence="1">2.5.1.145</ecNumber>
    </recommendedName>
</protein>
<sequence>MFEINVDPVAFSIGSLVVKWYGIMMALGVVALVSWIFWRIKRGANISYDTVLTAAIIAIPSGIVFAKLLHVIDAWEYYSLNPGAIFSGEGLTIFGAIIGATIGLWIYSRYSHFNLGYLLDVAVPGILLGQAIGRVGCLLNGCCYGEFGGTGCSVIYTNPATAAPYGVEVAPTQAYEIIFLLCLLTFSLFIAKKLRPDGQLFLLYISLYAAWRVAIGFVRVNDDFALGLEQAQVVGLILMAVAVPLFIYRLRKQKQTDKIT</sequence>
<name>LGT_DEHMB</name>
<dbReference type="EC" id="2.5.1.145" evidence="1"/>
<dbReference type="EMBL" id="CP000688">
    <property type="protein sequence ID" value="ABQ17439.1"/>
    <property type="molecule type" value="Genomic_DNA"/>
</dbReference>
<dbReference type="SMR" id="A5FQU1"/>
<dbReference type="KEGG" id="deb:DehaBAV1_0857"/>
<dbReference type="PATRIC" id="fig|216389.18.peg.907"/>
<dbReference type="HOGENOM" id="CLU_013386_0_1_0"/>
<dbReference type="UniPathway" id="UPA00664"/>
<dbReference type="GO" id="GO:0005886">
    <property type="term" value="C:plasma membrane"/>
    <property type="evidence" value="ECO:0007669"/>
    <property type="project" value="UniProtKB-SubCell"/>
</dbReference>
<dbReference type="GO" id="GO:0008961">
    <property type="term" value="F:phosphatidylglycerol-prolipoprotein diacylglyceryl transferase activity"/>
    <property type="evidence" value="ECO:0007669"/>
    <property type="project" value="UniProtKB-UniRule"/>
</dbReference>
<dbReference type="GO" id="GO:0042158">
    <property type="term" value="P:lipoprotein biosynthetic process"/>
    <property type="evidence" value="ECO:0007669"/>
    <property type="project" value="UniProtKB-UniRule"/>
</dbReference>
<dbReference type="HAMAP" id="MF_01147">
    <property type="entry name" value="Lgt"/>
    <property type="match status" value="1"/>
</dbReference>
<dbReference type="InterPro" id="IPR001640">
    <property type="entry name" value="Lgt"/>
</dbReference>
<dbReference type="PANTHER" id="PTHR30589:SF0">
    <property type="entry name" value="PHOSPHATIDYLGLYCEROL--PROLIPOPROTEIN DIACYLGLYCERYL TRANSFERASE"/>
    <property type="match status" value="1"/>
</dbReference>
<dbReference type="PANTHER" id="PTHR30589">
    <property type="entry name" value="PROLIPOPROTEIN DIACYLGLYCERYL TRANSFERASE"/>
    <property type="match status" value="1"/>
</dbReference>
<dbReference type="Pfam" id="PF01790">
    <property type="entry name" value="LGT"/>
    <property type="match status" value="1"/>
</dbReference>
<gene>
    <name evidence="1" type="primary">lgt</name>
    <name type="ordered locus">DehaBAV1_0857</name>
</gene>
<proteinExistence type="inferred from homology"/>